<protein>
    <recommendedName>
        <fullName>Pantothenate kinase</fullName>
        <ecNumber>2.7.1.33</ecNumber>
    </recommendedName>
    <alternativeName>
        <fullName>Pantothenic acid kinase</fullName>
    </alternativeName>
</protein>
<gene>
    <name type="ORF">SPBC4B4.01c</name>
</gene>
<feature type="chain" id="PRO_0000316854" description="Pantothenate kinase">
    <location>
        <begin position="1"/>
        <end position="403"/>
    </location>
</feature>
<feature type="modified residue" description="Phosphoserine" evidence="5">
    <location>
        <position position="80"/>
    </location>
</feature>
<feature type="modified residue" description="Phosphoserine" evidence="5">
    <location>
        <position position="82"/>
    </location>
</feature>
<feature type="modified residue" description="Phosphoserine" evidence="5">
    <location>
        <position position="84"/>
    </location>
</feature>
<proteinExistence type="evidence at protein level"/>
<sequence length="403" mass="44861">MSETECGRFSTISRETISNVERQLSQPPSVWLNLTGARIIENEGQFDKDIALPNNKSHVTHIAVDIGGSLAKVMYYVCESSSPSSSSSSISEAENYTGGRLSFMIFETAKIEDCIQFMANLIDNHVKNCNKKKITLIATGGGAYKFYDRMSKQLDIKVIREDEMECLIMGLNYFVSCIPREVFVLDLDTCELTFQNHLNCYHYPHMLVNIGSGVSILKVTGPSQFERIGGSSLGGGTLWGLLSLLTPANSFDEMLELSKGGDNTSVDMLVGDIYGKDIGYERFGLKSTTIASSFGKVFRERKPLEEFAPQDISRSLLLAISNNIGQIAYLHAQKHNVQNIYFGGSFIRNHVQTMHTLTYAIQYWSNHTMNAYFLRHEGYLGVFGAFMKYATSQPSNVPVPSIS</sequence>
<name>PANK_SCHPO</name>
<dbReference type="EC" id="2.7.1.33"/>
<dbReference type="EMBL" id="CU329671">
    <property type="protein sequence ID" value="CAA19281.1"/>
    <property type="molecule type" value="Genomic_DNA"/>
</dbReference>
<dbReference type="PIR" id="T40473">
    <property type="entry name" value="T40473"/>
</dbReference>
<dbReference type="SMR" id="O74962"/>
<dbReference type="FunCoup" id="O74962">
    <property type="interactions" value="631"/>
</dbReference>
<dbReference type="STRING" id="284812.O74962"/>
<dbReference type="iPTMnet" id="O74962"/>
<dbReference type="PaxDb" id="4896-SPBC4B4.01c.1"/>
<dbReference type="EnsemblFungi" id="SPBC4B4.01c.1">
    <property type="protein sequence ID" value="SPBC4B4.01c.1:pep"/>
    <property type="gene ID" value="SPBC4B4.01c"/>
</dbReference>
<dbReference type="KEGG" id="spo:2540815"/>
<dbReference type="PomBase" id="SPBC4B4.01c"/>
<dbReference type="VEuPathDB" id="FungiDB:SPBC4B4.01c"/>
<dbReference type="eggNOG" id="KOG2201">
    <property type="taxonomic scope" value="Eukaryota"/>
</dbReference>
<dbReference type="HOGENOM" id="CLU_011154_3_0_1"/>
<dbReference type="InParanoid" id="O74962"/>
<dbReference type="OMA" id="FKNPDIC"/>
<dbReference type="PhylomeDB" id="O74962"/>
<dbReference type="Reactome" id="R-SPO-199220">
    <property type="pathway name" value="Vitamin B5 (pantothenate) metabolism"/>
</dbReference>
<dbReference type="UniPathway" id="UPA00241">
    <property type="reaction ID" value="UER00352"/>
</dbReference>
<dbReference type="PRO" id="PR:O74962"/>
<dbReference type="Proteomes" id="UP000002485">
    <property type="component" value="Chromosome II"/>
</dbReference>
<dbReference type="GO" id="GO:0005737">
    <property type="term" value="C:cytoplasm"/>
    <property type="evidence" value="ECO:0000314"/>
    <property type="project" value="PomBase"/>
</dbReference>
<dbReference type="GO" id="GO:0005829">
    <property type="term" value="C:cytosol"/>
    <property type="evidence" value="ECO:0007005"/>
    <property type="project" value="PomBase"/>
</dbReference>
<dbReference type="GO" id="GO:0005634">
    <property type="term" value="C:nucleus"/>
    <property type="evidence" value="ECO:0000314"/>
    <property type="project" value="PomBase"/>
</dbReference>
<dbReference type="GO" id="GO:0005524">
    <property type="term" value="F:ATP binding"/>
    <property type="evidence" value="ECO:0007669"/>
    <property type="project" value="UniProtKB-KW"/>
</dbReference>
<dbReference type="GO" id="GO:0004594">
    <property type="term" value="F:pantothenate kinase activity"/>
    <property type="evidence" value="ECO:0000318"/>
    <property type="project" value="GO_Central"/>
</dbReference>
<dbReference type="GO" id="GO:0015937">
    <property type="term" value="P:coenzyme A biosynthetic process"/>
    <property type="evidence" value="ECO:0000318"/>
    <property type="project" value="GO_Central"/>
</dbReference>
<dbReference type="CDD" id="cd24123">
    <property type="entry name" value="ASKHA_NBD_PanK-II_Pank4"/>
    <property type="match status" value="1"/>
</dbReference>
<dbReference type="FunFam" id="3.30.420.40:FF:000025">
    <property type="entry name" value="pantothenate kinase 2, mitochondrial"/>
    <property type="match status" value="1"/>
</dbReference>
<dbReference type="Gene3D" id="3.30.420.40">
    <property type="match status" value="1"/>
</dbReference>
<dbReference type="Gene3D" id="3.30.420.510">
    <property type="match status" value="1"/>
</dbReference>
<dbReference type="InterPro" id="IPR043129">
    <property type="entry name" value="ATPase_NBD"/>
</dbReference>
<dbReference type="InterPro" id="IPR004567">
    <property type="entry name" value="Type_II_PanK"/>
</dbReference>
<dbReference type="NCBIfam" id="TIGR00555">
    <property type="entry name" value="panK_eukar"/>
    <property type="match status" value="1"/>
</dbReference>
<dbReference type="PANTHER" id="PTHR12280:SF20">
    <property type="entry name" value="4'-PHOSPHOPANTETHEINE PHOSPHATASE"/>
    <property type="match status" value="1"/>
</dbReference>
<dbReference type="PANTHER" id="PTHR12280">
    <property type="entry name" value="PANTOTHENATE KINASE"/>
    <property type="match status" value="1"/>
</dbReference>
<dbReference type="Pfam" id="PF03630">
    <property type="entry name" value="Fumble"/>
    <property type="match status" value="1"/>
</dbReference>
<dbReference type="SUPFAM" id="SSF53067">
    <property type="entry name" value="Actin-like ATPase domain"/>
    <property type="match status" value="2"/>
</dbReference>
<accession>O74962</accession>
<comment type="function">
    <text evidence="2">Plays a role in the physiological regulation of the intracellular CoA concentration.</text>
</comment>
<comment type="catalytic activity">
    <reaction evidence="2">
        <text>(R)-pantothenate + ATP = (R)-4'-phosphopantothenate + ADP + H(+)</text>
        <dbReference type="Rhea" id="RHEA:16373"/>
        <dbReference type="ChEBI" id="CHEBI:10986"/>
        <dbReference type="ChEBI" id="CHEBI:15378"/>
        <dbReference type="ChEBI" id="CHEBI:29032"/>
        <dbReference type="ChEBI" id="CHEBI:30616"/>
        <dbReference type="ChEBI" id="CHEBI:456216"/>
        <dbReference type="EC" id="2.7.1.33"/>
    </reaction>
</comment>
<comment type="activity regulation">
    <text evidence="1">Regulated by feedback inhibition by malonyl-CoA.</text>
</comment>
<comment type="pathway">
    <text>Cofactor biosynthesis; coenzyme A biosynthesis; CoA from (R)-pantothenate: step 1/5.</text>
</comment>
<comment type="subcellular location">
    <subcellularLocation>
        <location evidence="4">Cytoplasm</location>
    </subcellularLocation>
    <subcellularLocation>
        <location evidence="4">Nucleus</location>
    </subcellularLocation>
</comment>
<comment type="similarity">
    <text evidence="3">Belongs to the type II pantothenate kinase family.</text>
</comment>
<evidence type="ECO:0000250" key="1">
    <source>
        <dbReference type="UniProtKB" id="Q04430"/>
    </source>
</evidence>
<evidence type="ECO:0000250" key="2">
    <source>
        <dbReference type="UniProtKB" id="Q8K4K6"/>
    </source>
</evidence>
<evidence type="ECO:0000255" key="3"/>
<evidence type="ECO:0000269" key="4">
    <source>
    </source>
</evidence>
<evidence type="ECO:0000269" key="5">
    <source>
    </source>
</evidence>
<evidence type="ECO:0000305" key="6"/>
<evidence type="ECO:0000312" key="7">
    <source>
        <dbReference type="EMBL" id="CAA19281.1"/>
    </source>
</evidence>
<organism>
    <name type="scientific">Schizosaccharomyces pombe (strain 972 / ATCC 24843)</name>
    <name type="common">Fission yeast</name>
    <dbReference type="NCBI Taxonomy" id="284812"/>
    <lineage>
        <taxon>Eukaryota</taxon>
        <taxon>Fungi</taxon>
        <taxon>Dikarya</taxon>
        <taxon>Ascomycota</taxon>
        <taxon>Taphrinomycotina</taxon>
        <taxon>Schizosaccharomycetes</taxon>
        <taxon>Schizosaccharomycetales</taxon>
        <taxon>Schizosaccharomycetaceae</taxon>
        <taxon>Schizosaccharomyces</taxon>
    </lineage>
</organism>
<reference evidence="7" key="1">
    <citation type="journal article" date="2002" name="Nature">
        <title>The genome sequence of Schizosaccharomyces pombe.</title>
        <authorList>
            <person name="Wood V."/>
            <person name="Gwilliam R."/>
            <person name="Rajandream M.A."/>
            <person name="Lyne M.H."/>
            <person name="Lyne R."/>
            <person name="Stewart A."/>
            <person name="Sgouros J.G."/>
            <person name="Peat N."/>
            <person name="Hayles J."/>
            <person name="Baker S.G."/>
            <person name="Basham D."/>
            <person name="Bowman S."/>
            <person name="Brooks K."/>
            <person name="Brown D."/>
            <person name="Brown S."/>
            <person name="Chillingworth T."/>
            <person name="Churcher C.M."/>
            <person name="Collins M."/>
            <person name="Connor R."/>
            <person name="Cronin A."/>
            <person name="Davis P."/>
            <person name="Feltwell T."/>
            <person name="Fraser A."/>
            <person name="Gentles S."/>
            <person name="Goble A."/>
            <person name="Hamlin N."/>
            <person name="Harris D.E."/>
            <person name="Hidalgo J."/>
            <person name="Hodgson G."/>
            <person name="Holroyd S."/>
            <person name="Hornsby T."/>
            <person name="Howarth S."/>
            <person name="Huckle E.J."/>
            <person name="Hunt S."/>
            <person name="Jagels K."/>
            <person name="James K.D."/>
            <person name="Jones L."/>
            <person name="Jones M."/>
            <person name="Leather S."/>
            <person name="McDonald S."/>
            <person name="McLean J."/>
            <person name="Mooney P."/>
            <person name="Moule S."/>
            <person name="Mungall K.L."/>
            <person name="Murphy L.D."/>
            <person name="Niblett D."/>
            <person name="Odell C."/>
            <person name="Oliver K."/>
            <person name="O'Neil S."/>
            <person name="Pearson D."/>
            <person name="Quail M.A."/>
            <person name="Rabbinowitsch E."/>
            <person name="Rutherford K.M."/>
            <person name="Rutter S."/>
            <person name="Saunders D."/>
            <person name="Seeger K."/>
            <person name="Sharp S."/>
            <person name="Skelton J."/>
            <person name="Simmonds M.N."/>
            <person name="Squares R."/>
            <person name="Squares S."/>
            <person name="Stevens K."/>
            <person name="Taylor K."/>
            <person name="Taylor R.G."/>
            <person name="Tivey A."/>
            <person name="Walsh S.V."/>
            <person name="Warren T."/>
            <person name="Whitehead S."/>
            <person name="Woodward J.R."/>
            <person name="Volckaert G."/>
            <person name="Aert R."/>
            <person name="Robben J."/>
            <person name="Grymonprez B."/>
            <person name="Weltjens I."/>
            <person name="Vanstreels E."/>
            <person name="Rieger M."/>
            <person name="Schaefer M."/>
            <person name="Mueller-Auer S."/>
            <person name="Gabel C."/>
            <person name="Fuchs M."/>
            <person name="Duesterhoeft A."/>
            <person name="Fritzc C."/>
            <person name="Holzer E."/>
            <person name="Moestl D."/>
            <person name="Hilbert H."/>
            <person name="Borzym K."/>
            <person name="Langer I."/>
            <person name="Beck A."/>
            <person name="Lehrach H."/>
            <person name="Reinhardt R."/>
            <person name="Pohl T.M."/>
            <person name="Eger P."/>
            <person name="Zimmermann W."/>
            <person name="Wedler H."/>
            <person name="Wambutt R."/>
            <person name="Purnelle B."/>
            <person name="Goffeau A."/>
            <person name="Cadieu E."/>
            <person name="Dreano S."/>
            <person name="Gloux S."/>
            <person name="Lelaure V."/>
            <person name="Mottier S."/>
            <person name="Galibert F."/>
            <person name="Aves S.J."/>
            <person name="Xiang Z."/>
            <person name="Hunt C."/>
            <person name="Moore K."/>
            <person name="Hurst S.M."/>
            <person name="Lucas M."/>
            <person name="Rochet M."/>
            <person name="Gaillardin C."/>
            <person name="Tallada V.A."/>
            <person name="Garzon A."/>
            <person name="Thode G."/>
            <person name="Daga R.R."/>
            <person name="Cruzado L."/>
            <person name="Jimenez J."/>
            <person name="Sanchez M."/>
            <person name="del Rey F."/>
            <person name="Benito J."/>
            <person name="Dominguez A."/>
            <person name="Revuelta J.L."/>
            <person name="Moreno S."/>
            <person name="Armstrong J."/>
            <person name="Forsburg S.L."/>
            <person name="Cerutti L."/>
            <person name="Lowe T."/>
            <person name="McCombie W.R."/>
            <person name="Paulsen I."/>
            <person name="Potashkin J."/>
            <person name="Shpakovski G.V."/>
            <person name="Ussery D."/>
            <person name="Barrell B.G."/>
            <person name="Nurse P."/>
        </authorList>
    </citation>
    <scope>NUCLEOTIDE SEQUENCE [LARGE SCALE GENOMIC DNA]</scope>
    <source>
        <strain>972 / ATCC 24843</strain>
    </source>
</reference>
<reference evidence="6" key="2">
    <citation type="journal article" date="2006" name="Nat. Biotechnol.">
        <title>ORFeome cloning and global analysis of protein localization in the fission yeast Schizosaccharomyces pombe.</title>
        <authorList>
            <person name="Matsuyama A."/>
            <person name="Arai R."/>
            <person name="Yashiroda Y."/>
            <person name="Shirai A."/>
            <person name="Kamata A."/>
            <person name="Sekido S."/>
            <person name="Kobayashi Y."/>
            <person name="Hashimoto A."/>
            <person name="Hamamoto M."/>
            <person name="Hiraoka Y."/>
            <person name="Horinouchi S."/>
            <person name="Yoshida M."/>
        </authorList>
    </citation>
    <scope>SUBCELLULAR LOCATION [LARGE SCALE ANALYSIS]</scope>
</reference>
<reference key="3">
    <citation type="journal article" date="2008" name="J. Proteome Res.">
        <title>Phosphoproteome analysis of fission yeast.</title>
        <authorList>
            <person name="Wilson-Grady J.T."/>
            <person name="Villen J."/>
            <person name="Gygi S.P."/>
        </authorList>
    </citation>
    <scope>PHOSPHORYLATION [LARGE SCALE ANALYSIS] AT SER-80; SER-82 AND SER-84</scope>
    <scope>IDENTIFICATION BY MASS SPECTROMETRY</scope>
</reference>
<keyword id="KW-0067">ATP-binding</keyword>
<keyword id="KW-0173">Coenzyme A biosynthesis</keyword>
<keyword id="KW-0963">Cytoplasm</keyword>
<keyword id="KW-0418">Kinase</keyword>
<keyword id="KW-0547">Nucleotide-binding</keyword>
<keyword id="KW-0539">Nucleus</keyword>
<keyword id="KW-0597">Phosphoprotein</keyword>
<keyword id="KW-1185">Reference proteome</keyword>
<keyword id="KW-0808">Transferase</keyword>